<accession>Q9K5E4</accession>
<keyword id="KW-0002">3D-structure</keyword>
<keyword id="KW-0067">ATP-binding</keyword>
<keyword id="KW-0963">Cytoplasm</keyword>
<keyword id="KW-0460">Magnesium</keyword>
<keyword id="KW-0479">Metal-binding</keyword>
<keyword id="KW-0547">Nucleotide-binding</keyword>
<keyword id="KW-0554">One-carbon metabolism</keyword>
<keyword id="KW-0630">Potassium</keyword>
<keyword id="KW-1185">Reference proteome</keyword>
<keyword id="KW-0808">Transferase</keyword>
<comment type="function">
    <text evidence="1">Catalyzes the formation of S-adenosylmethionine (AdoMet) from methionine and ATP. The overall synthetic reaction is composed of two sequential steps, AdoMet formation and the subsequent tripolyphosphate hydrolysis which occurs prior to release of AdoMet from the enzyme.</text>
</comment>
<comment type="catalytic activity">
    <reaction evidence="1">
        <text>L-methionine + ATP + H2O = S-adenosyl-L-methionine + phosphate + diphosphate</text>
        <dbReference type="Rhea" id="RHEA:21080"/>
        <dbReference type="ChEBI" id="CHEBI:15377"/>
        <dbReference type="ChEBI" id="CHEBI:30616"/>
        <dbReference type="ChEBI" id="CHEBI:33019"/>
        <dbReference type="ChEBI" id="CHEBI:43474"/>
        <dbReference type="ChEBI" id="CHEBI:57844"/>
        <dbReference type="ChEBI" id="CHEBI:59789"/>
        <dbReference type="EC" id="2.5.1.6"/>
    </reaction>
</comment>
<comment type="cofactor">
    <cofactor evidence="1">
        <name>Mg(2+)</name>
        <dbReference type="ChEBI" id="CHEBI:18420"/>
    </cofactor>
    <text evidence="1">Binds 2 divalent ions per subunit.</text>
</comment>
<comment type="cofactor">
    <cofactor evidence="1">
        <name>K(+)</name>
        <dbReference type="ChEBI" id="CHEBI:29103"/>
    </cofactor>
    <text evidence="1">Binds 1 potassium ion per subunit.</text>
</comment>
<comment type="pathway">
    <text evidence="1">Amino-acid biosynthesis; S-adenosyl-L-methionine biosynthesis; S-adenosyl-L-methionine from L-methionine: step 1/1.</text>
</comment>
<comment type="subunit">
    <text evidence="1">Homotetramer; dimer of dimers.</text>
</comment>
<comment type="subcellular location">
    <subcellularLocation>
        <location evidence="1">Cytoplasm</location>
    </subcellularLocation>
</comment>
<comment type="similarity">
    <text evidence="1">Belongs to the AdoMet synthase family.</text>
</comment>
<evidence type="ECO:0000255" key="1">
    <source>
        <dbReference type="HAMAP-Rule" id="MF_00086"/>
    </source>
</evidence>
<evidence type="ECO:0000256" key="2">
    <source>
        <dbReference type="SAM" id="MobiDB-lite"/>
    </source>
</evidence>
<evidence type="ECO:0007829" key="3">
    <source>
        <dbReference type="PDB" id="8JZH"/>
    </source>
</evidence>
<evidence type="ECO:0007829" key="4">
    <source>
        <dbReference type="PDB" id="8JZI"/>
    </source>
</evidence>
<sequence>MAQPTAVRLFTSESVTEGHPDKICDAISDTILDALLEKDPQSRVAVETVVTTGIVHVVGEVRTSAYVEIPQLVRNKLIEIGFNSSEVGFDGRTCGVSVSIGEQSQEIADGVDNSDEARTNGDVEEDDRAGAGDQGLMFGYATNETEEYMPLPIALAHRLSRRLTQVRKEGIVPHLRPDGKTQVTFAYDAQDRPSHLDTVVISTQHDPEVDRAWLETQLREHVIDWVIKDAGIEDLATGEITVLINPSGSFILGGPMGDAGLTGRKIIVDTYGGMARHGGGAFSGKDPSKVDRSAAYAMRWVAKNIVAAGLADRAEVQVAYAIGRAKPVGLYVETFDTNKEGLSDEQIQAAVLEVFDLRPAAIIRELDLLRPIYADTAAYGHFGRTDLDLPWEAIDRVDELRAALKLA</sequence>
<protein>
    <recommendedName>
        <fullName evidence="1">S-adenosylmethionine synthase</fullName>
        <shortName evidence="1">AdoMet synthase</shortName>
        <ecNumber evidence="1">2.5.1.6</ecNumber>
    </recommendedName>
    <alternativeName>
        <fullName evidence="1">MAT</fullName>
    </alternativeName>
    <alternativeName>
        <fullName evidence="1">Methionine adenosyltransferase</fullName>
    </alternativeName>
</protein>
<reference key="1">
    <citation type="journal article" date="2000" name="FEMS Microbiol. Lett.">
        <title>Rapid cloning of metK encoding methionine adenosyltransferase from Corynebacterium glutamicum by screening a genomic library on a high density colony-array.</title>
        <authorList>
            <person name="Grossmann K."/>
            <person name="Herbster K."/>
            <person name="Mack M."/>
        </authorList>
    </citation>
    <scope>NUCLEOTIDE SEQUENCE [GENOMIC DNA]</scope>
    <source>
        <strain>ATCC 13032 / DSM 20300 / JCM 1318 / BCRC 11384 / CCUG 27702 / LMG 3730 / NBRC 12168 / NCIMB 10025 / NRRL B-2784 / 534</strain>
    </source>
</reference>
<reference key="2">
    <citation type="journal article" date="2003" name="Appl. Microbiol. Biotechnol.">
        <title>The Corynebacterium glutamicum genome: features and impacts on biotechnological processes.</title>
        <authorList>
            <person name="Ikeda M."/>
            <person name="Nakagawa S."/>
        </authorList>
    </citation>
    <scope>NUCLEOTIDE SEQUENCE [LARGE SCALE GENOMIC DNA]</scope>
    <source>
        <strain>ATCC 13032 / DSM 20300 / JCM 1318 / BCRC 11384 / CCUG 27702 / LMG 3730 / NBRC 12168 / NCIMB 10025 / NRRL B-2784 / 534</strain>
    </source>
</reference>
<reference key="3">
    <citation type="journal article" date="2003" name="J. Biotechnol.">
        <title>The complete Corynebacterium glutamicum ATCC 13032 genome sequence and its impact on the production of L-aspartate-derived amino acids and vitamins.</title>
        <authorList>
            <person name="Kalinowski J."/>
            <person name="Bathe B."/>
            <person name="Bartels D."/>
            <person name="Bischoff N."/>
            <person name="Bott M."/>
            <person name="Burkovski A."/>
            <person name="Dusch N."/>
            <person name="Eggeling L."/>
            <person name="Eikmanns B.J."/>
            <person name="Gaigalat L."/>
            <person name="Goesmann A."/>
            <person name="Hartmann M."/>
            <person name="Huthmacher K."/>
            <person name="Kraemer R."/>
            <person name="Linke B."/>
            <person name="McHardy A.C."/>
            <person name="Meyer F."/>
            <person name="Moeckel B."/>
            <person name="Pfefferle W."/>
            <person name="Puehler A."/>
            <person name="Rey D.A."/>
            <person name="Rueckert C."/>
            <person name="Rupp O."/>
            <person name="Sahm H."/>
            <person name="Wendisch V.F."/>
            <person name="Wiegraebe I."/>
            <person name="Tauch A."/>
        </authorList>
    </citation>
    <scope>NUCLEOTIDE SEQUENCE [LARGE SCALE GENOMIC DNA]</scope>
    <source>
        <strain>ATCC 13032 / DSM 20300 / JCM 1318 / BCRC 11384 / CCUG 27702 / LMG 3730 / NBRC 12168 / NCIMB 10025 / NRRL B-2784 / 534</strain>
    </source>
</reference>
<feature type="chain" id="PRO_0000174513" description="S-adenosylmethionine synthase">
    <location>
        <begin position="1"/>
        <end position="407"/>
    </location>
</feature>
<feature type="region of interest" description="Flexible loop" evidence="1">
    <location>
        <begin position="103"/>
        <end position="113"/>
    </location>
</feature>
<feature type="region of interest" description="Disordered" evidence="2">
    <location>
        <begin position="107"/>
        <end position="134"/>
    </location>
</feature>
<feature type="binding site" description="in other chain" evidence="1">
    <location>
        <position position="19"/>
    </location>
    <ligand>
        <name>ATP</name>
        <dbReference type="ChEBI" id="CHEBI:30616"/>
        <note>ligand shared between two neighboring subunits</note>
    </ligand>
</feature>
<feature type="binding site" evidence="1">
    <location>
        <position position="21"/>
    </location>
    <ligand>
        <name>Mg(2+)</name>
        <dbReference type="ChEBI" id="CHEBI:18420"/>
    </ligand>
</feature>
<feature type="binding site" evidence="1">
    <location>
        <position position="47"/>
    </location>
    <ligand>
        <name>K(+)</name>
        <dbReference type="ChEBI" id="CHEBI:29103"/>
    </ligand>
</feature>
<feature type="binding site" description="in other chain" evidence="1">
    <location>
        <position position="60"/>
    </location>
    <ligand>
        <name>L-methionine</name>
        <dbReference type="ChEBI" id="CHEBI:57844"/>
        <note>ligand shared between two neighboring subunits</note>
    </ligand>
</feature>
<feature type="binding site" description="in other chain" evidence="1">
    <location>
        <position position="103"/>
    </location>
    <ligand>
        <name>L-methionine</name>
        <dbReference type="ChEBI" id="CHEBI:57844"/>
        <note>ligand shared between two neighboring subunits</note>
    </ligand>
</feature>
<feature type="binding site" description="in other chain" evidence="1">
    <location>
        <begin position="178"/>
        <end position="180"/>
    </location>
    <ligand>
        <name>ATP</name>
        <dbReference type="ChEBI" id="CHEBI:30616"/>
        <note>ligand shared between two neighboring subunits</note>
    </ligand>
</feature>
<feature type="binding site" evidence="1">
    <location>
        <position position="258"/>
    </location>
    <ligand>
        <name>ATP</name>
        <dbReference type="ChEBI" id="CHEBI:30616"/>
        <note>ligand shared between two neighboring subunits</note>
    </ligand>
</feature>
<feature type="binding site" evidence="1">
    <location>
        <position position="258"/>
    </location>
    <ligand>
        <name>L-methionine</name>
        <dbReference type="ChEBI" id="CHEBI:57844"/>
        <note>ligand shared between two neighboring subunits</note>
    </ligand>
</feature>
<feature type="binding site" description="in other chain" evidence="1">
    <location>
        <begin position="264"/>
        <end position="265"/>
    </location>
    <ligand>
        <name>ATP</name>
        <dbReference type="ChEBI" id="CHEBI:30616"/>
        <note>ligand shared between two neighboring subunits</note>
    </ligand>
</feature>
<feature type="binding site" evidence="1">
    <location>
        <position position="281"/>
    </location>
    <ligand>
        <name>ATP</name>
        <dbReference type="ChEBI" id="CHEBI:30616"/>
        <note>ligand shared between two neighboring subunits</note>
    </ligand>
</feature>
<feature type="binding site" evidence="1">
    <location>
        <position position="285"/>
    </location>
    <ligand>
        <name>ATP</name>
        <dbReference type="ChEBI" id="CHEBI:30616"/>
        <note>ligand shared between two neighboring subunits</note>
    </ligand>
</feature>
<feature type="binding site" description="in other chain" evidence="1">
    <location>
        <position position="289"/>
    </location>
    <ligand>
        <name>L-methionine</name>
        <dbReference type="ChEBI" id="CHEBI:57844"/>
        <note>ligand shared between two neighboring subunits</note>
    </ligand>
</feature>
<feature type="strand" evidence="4">
    <location>
        <begin position="8"/>
        <end position="15"/>
    </location>
</feature>
<feature type="helix" evidence="4">
    <location>
        <begin position="20"/>
        <end position="38"/>
    </location>
</feature>
<feature type="strand" evidence="4">
    <location>
        <begin position="43"/>
        <end position="51"/>
    </location>
</feature>
<feature type="strand" evidence="4">
    <location>
        <begin position="54"/>
        <end position="62"/>
    </location>
</feature>
<feature type="helix" evidence="4">
    <location>
        <begin position="69"/>
        <end position="80"/>
    </location>
</feature>
<feature type="helix" evidence="4">
    <location>
        <begin position="85"/>
        <end position="87"/>
    </location>
</feature>
<feature type="turn" evidence="4">
    <location>
        <begin position="91"/>
        <end position="93"/>
    </location>
</feature>
<feature type="strand" evidence="4">
    <location>
        <begin position="94"/>
        <end position="101"/>
    </location>
</feature>
<feature type="helix" evidence="3">
    <location>
        <begin position="126"/>
        <end position="128"/>
    </location>
</feature>
<feature type="strand" evidence="4">
    <location>
        <begin position="131"/>
        <end position="133"/>
    </location>
</feature>
<feature type="strand" evidence="4">
    <location>
        <begin position="135"/>
        <end position="142"/>
    </location>
</feature>
<feature type="helix" evidence="4">
    <location>
        <begin position="151"/>
        <end position="168"/>
    </location>
</feature>
<feature type="strand" evidence="4">
    <location>
        <begin position="175"/>
        <end position="187"/>
    </location>
</feature>
<feature type="strand" evidence="4">
    <location>
        <begin position="193"/>
        <end position="205"/>
    </location>
</feature>
<feature type="helix" evidence="4">
    <location>
        <begin position="211"/>
        <end position="221"/>
    </location>
</feature>
<feature type="helix" evidence="4">
    <location>
        <begin position="223"/>
        <end position="229"/>
    </location>
</feature>
<feature type="helix" evidence="4">
    <location>
        <begin position="233"/>
        <end position="236"/>
    </location>
</feature>
<feature type="strand" evidence="4">
    <location>
        <begin position="241"/>
        <end position="245"/>
    </location>
</feature>
<feature type="turn" evidence="4">
    <location>
        <begin position="254"/>
        <end position="257"/>
    </location>
</feature>
<feature type="strand" evidence="4">
    <location>
        <begin position="258"/>
        <end position="261"/>
    </location>
</feature>
<feature type="turn" evidence="4">
    <location>
        <begin position="266"/>
        <end position="273"/>
    </location>
</feature>
<feature type="helix" evidence="4">
    <location>
        <begin position="290"/>
        <end position="307"/>
    </location>
</feature>
<feature type="strand" evidence="4">
    <location>
        <begin position="312"/>
        <end position="320"/>
    </location>
</feature>
<feature type="strand" evidence="4">
    <location>
        <begin position="328"/>
        <end position="333"/>
    </location>
</feature>
<feature type="helix" evidence="4">
    <location>
        <begin position="344"/>
        <end position="354"/>
    </location>
</feature>
<feature type="helix" evidence="4">
    <location>
        <begin position="359"/>
        <end position="366"/>
    </location>
</feature>
<feature type="helix" evidence="4">
    <location>
        <begin position="374"/>
        <end position="377"/>
    </location>
</feature>
<feature type="strand" evidence="4">
    <location>
        <begin position="381"/>
        <end position="383"/>
    </location>
</feature>
<feature type="helix" evidence="4">
    <location>
        <begin position="390"/>
        <end position="392"/>
    </location>
</feature>
<feature type="helix" evidence="4">
    <location>
        <begin position="397"/>
        <end position="403"/>
    </location>
</feature>
<name>METK_CORGL</name>
<proteinExistence type="evidence at protein level"/>
<gene>
    <name evidence="1" type="primary">metK</name>
    <name type="ordered locus">Cgl1603</name>
    <name type="ordered locus">cg1806</name>
</gene>
<dbReference type="EC" id="2.5.1.6" evidence="1"/>
<dbReference type="EMBL" id="AJ290443">
    <property type="protein sequence ID" value="CAB93961.1"/>
    <property type="molecule type" value="Genomic_DNA"/>
</dbReference>
<dbReference type="EMBL" id="BA000036">
    <property type="protein sequence ID" value="BAB98996.1"/>
    <property type="molecule type" value="Genomic_DNA"/>
</dbReference>
<dbReference type="EMBL" id="BX927152">
    <property type="protein sequence ID" value="CAF21611.1"/>
    <property type="molecule type" value="Genomic_DNA"/>
</dbReference>
<dbReference type="RefSeq" id="NP_600817.1">
    <property type="nucleotide sequence ID" value="NC_003450.3"/>
</dbReference>
<dbReference type="RefSeq" id="WP_003856000.1">
    <property type="nucleotide sequence ID" value="NC_006958.1"/>
</dbReference>
<dbReference type="PDB" id="8JZG">
    <property type="method" value="X-ray"/>
    <property type="resolution" value="2.39 A"/>
    <property type="chains" value="A/B/C/D=1-407"/>
</dbReference>
<dbReference type="PDB" id="8JZH">
    <property type="method" value="X-ray"/>
    <property type="resolution" value="2.20 A"/>
    <property type="chains" value="A/B/C=1-407"/>
</dbReference>
<dbReference type="PDB" id="8JZI">
    <property type="method" value="X-ray"/>
    <property type="resolution" value="1.76 A"/>
    <property type="chains" value="A/B/C/D=1-407"/>
</dbReference>
<dbReference type="PDBsum" id="8JZG"/>
<dbReference type="PDBsum" id="8JZH"/>
<dbReference type="PDBsum" id="8JZI"/>
<dbReference type="SMR" id="Q9K5E4"/>
<dbReference type="STRING" id="196627.cg1806"/>
<dbReference type="GeneID" id="1019571"/>
<dbReference type="KEGG" id="cgb:cg1806"/>
<dbReference type="KEGG" id="cgl:Cgl1603"/>
<dbReference type="PATRIC" id="fig|196627.13.peg.1565"/>
<dbReference type="eggNOG" id="COG0192">
    <property type="taxonomic scope" value="Bacteria"/>
</dbReference>
<dbReference type="HOGENOM" id="CLU_041802_1_1_11"/>
<dbReference type="OrthoDB" id="9801686at2"/>
<dbReference type="BioCyc" id="CORYNE:G18NG-11188-MONOMER"/>
<dbReference type="BRENDA" id="2.5.1.6">
    <property type="organism ID" value="960"/>
</dbReference>
<dbReference type="UniPathway" id="UPA00315">
    <property type="reaction ID" value="UER00080"/>
</dbReference>
<dbReference type="Proteomes" id="UP000000582">
    <property type="component" value="Chromosome"/>
</dbReference>
<dbReference type="Proteomes" id="UP000001009">
    <property type="component" value="Chromosome"/>
</dbReference>
<dbReference type="GO" id="GO:0005737">
    <property type="term" value="C:cytoplasm"/>
    <property type="evidence" value="ECO:0007669"/>
    <property type="project" value="UniProtKB-SubCell"/>
</dbReference>
<dbReference type="GO" id="GO:0005524">
    <property type="term" value="F:ATP binding"/>
    <property type="evidence" value="ECO:0007669"/>
    <property type="project" value="UniProtKB-UniRule"/>
</dbReference>
<dbReference type="GO" id="GO:0000287">
    <property type="term" value="F:magnesium ion binding"/>
    <property type="evidence" value="ECO:0007669"/>
    <property type="project" value="UniProtKB-UniRule"/>
</dbReference>
<dbReference type="GO" id="GO:0004478">
    <property type="term" value="F:methionine adenosyltransferase activity"/>
    <property type="evidence" value="ECO:0007669"/>
    <property type="project" value="UniProtKB-UniRule"/>
</dbReference>
<dbReference type="GO" id="GO:0006730">
    <property type="term" value="P:one-carbon metabolic process"/>
    <property type="evidence" value="ECO:0007669"/>
    <property type="project" value="UniProtKB-KW"/>
</dbReference>
<dbReference type="GO" id="GO:0006556">
    <property type="term" value="P:S-adenosylmethionine biosynthetic process"/>
    <property type="evidence" value="ECO:0007669"/>
    <property type="project" value="UniProtKB-UniRule"/>
</dbReference>
<dbReference type="CDD" id="cd18079">
    <property type="entry name" value="S-AdoMet_synt"/>
    <property type="match status" value="1"/>
</dbReference>
<dbReference type="FunFam" id="3.30.300.10:FF:000003">
    <property type="entry name" value="S-adenosylmethionine synthase"/>
    <property type="match status" value="1"/>
</dbReference>
<dbReference type="Gene3D" id="3.30.300.10">
    <property type="match status" value="3"/>
</dbReference>
<dbReference type="HAMAP" id="MF_00086">
    <property type="entry name" value="S_AdoMet_synth1"/>
    <property type="match status" value="1"/>
</dbReference>
<dbReference type="InterPro" id="IPR022631">
    <property type="entry name" value="ADOMET_SYNTHASE_CS"/>
</dbReference>
<dbReference type="InterPro" id="IPR022630">
    <property type="entry name" value="S-AdoMet_synt_C"/>
</dbReference>
<dbReference type="InterPro" id="IPR022629">
    <property type="entry name" value="S-AdoMet_synt_central"/>
</dbReference>
<dbReference type="InterPro" id="IPR022628">
    <property type="entry name" value="S-AdoMet_synt_N"/>
</dbReference>
<dbReference type="InterPro" id="IPR002133">
    <property type="entry name" value="S-AdoMet_synthetase"/>
</dbReference>
<dbReference type="InterPro" id="IPR022636">
    <property type="entry name" value="S-AdoMet_synthetase_sfam"/>
</dbReference>
<dbReference type="NCBIfam" id="TIGR01034">
    <property type="entry name" value="metK"/>
    <property type="match status" value="1"/>
</dbReference>
<dbReference type="PANTHER" id="PTHR11964">
    <property type="entry name" value="S-ADENOSYLMETHIONINE SYNTHETASE"/>
    <property type="match status" value="1"/>
</dbReference>
<dbReference type="Pfam" id="PF02773">
    <property type="entry name" value="S-AdoMet_synt_C"/>
    <property type="match status" value="1"/>
</dbReference>
<dbReference type="Pfam" id="PF02772">
    <property type="entry name" value="S-AdoMet_synt_M"/>
    <property type="match status" value="1"/>
</dbReference>
<dbReference type="Pfam" id="PF00438">
    <property type="entry name" value="S-AdoMet_synt_N"/>
    <property type="match status" value="1"/>
</dbReference>
<dbReference type="PIRSF" id="PIRSF000497">
    <property type="entry name" value="MAT"/>
    <property type="match status" value="1"/>
</dbReference>
<dbReference type="SUPFAM" id="SSF55973">
    <property type="entry name" value="S-adenosylmethionine synthetase"/>
    <property type="match status" value="3"/>
</dbReference>
<dbReference type="PROSITE" id="PS00376">
    <property type="entry name" value="ADOMET_SYNTHASE_1"/>
    <property type="match status" value="1"/>
</dbReference>
<dbReference type="PROSITE" id="PS00377">
    <property type="entry name" value="ADOMET_SYNTHASE_2"/>
    <property type="match status" value="1"/>
</dbReference>
<organism>
    <name type="scientific">Corynebacterium glutamicum (strain ATCC 13032 / DSM 20300 / JCM 1318 / BCRC 11384 / CCUG 27702 / LMG 3730 / NBRC 12168 / NCIMB 10025 / NRRL B-2784 / 534)</name>
    <dbReference type="NCBI Taxonomy" id="196627"/>
    <lineage>
        <taxon>Bacteria</taxon>
        <taxon>Bacillati</taxon>
        <taxon>Actinomycetota</taxon>
        <taxon>Actinomycetes</taxon>
        <taxon>Mycobacteriales</taxon>
        <taxon>Corynebacteriaceae</taxon>
        <taxon>Corynebacterium</taxon>
    </lineage>
</organism>